<evidence type="ECO:0000255" key="1">
    <source>
        <dbReference type="HAMAP-Rule" id="MF_00326"/>
    </source>
</evidence>
<evidence type="ECO:0000305" key="2"/>
<sequence>MAVYVKFDVPQEMEEKTAEVLSKSEKVKKGANEVTKAVERGTAKLVVLAKDVQPEEIVAHIPIICEEKGIPYTYIATKEDLGKAIGLEVSTAAVAIIAEKDANALKDLVEKINGLKA</sequence>
<protein>
    <recommendedName>
        <fullName evidence="1">Large ribosomal subunit protein eL8</fullName>
    </recommendedName>
    <alternativeName>
        <fullName evidence="2">50S ribosomal protein L7Ae</fullName>
    </alternativeName>
    <alternativeName>
        <fullName evidence="1">Ribosomal protein L8e</fullName>
    </alternativeName>
</protein>
<accession>A6UT51</accession>
<reference key="1">
    <citation type="submission" date="2007-06" db="EMBL/GenBank/DDBJ databases">
        <title>Complete sequence of Methanococcus aeolicus Nankai-3.</title>
        <authorList>
            <consortium name="US DOE Joint Genome Institute"/>
            <person name="Copeland A."/>
            <person name="Lucas S."/>
            <person name="Lapidus A."/>
            <person name="Barry K."/>
            <person name="Glavina del Rio T."/>
            <person name="Dalin E."/>
            <person name="Tice H."/>
            <person name="Pitluck S."/>
            <person name="Chain P."/>
            <person name="Malfatti S."/>
            <person name="Shin M."/>
            <person name="Vergez L."/>
            <person name="Schmutz J."/>
            <person name="Larimer F."/>
            <person name="Land M."/>
            <person name="Hauser L."/>
            <person name="Kyrpides N."/>
            <person name="Lykidis A."/>
            <person name="Sieprawska-Lupa M."/>
            <person name="Whitman W.B."/>
            <person name="Richardson P."/>
        </authorList>
    </citation>
    <scope>NUCLEOTIDE SEQUENCE [LARGE SCALE GENOMIC DNA]</scope>
    <source>
        <strain>ATCC BAA-1280 / DSM 17508 / OCM 812 / Nankai-3</strain>
    </source>
</reference>
<dbReference type="EMBL" id="CP000743">
    <property type="protein sequence ID" value="ABR55673.1"/>
    <property type="molecule type" value="Genomic_DNA"/>
</dbReference>
<dbReference type="RefSeq" id="WP_011972805.1">
    <property type="nucleotide sequence ID" value="NC_009635.1"/>
</dbReference>
<dbReference type="SMR" id="A6UT51"/>
<dbReference type="STRING" id="419665.Maeo_0081"/>
<dbReference type="GeneID" id="5327321"/>
<dbReference type="GeneID" id="75305096"/>
<dbReference type="KEGG" id="mae:Maeo_0081"/>
<dbReference type="eggNOG" id="arCOG01751">
    <property type="taxonomic scope" value="Archaea"/>
</dbReference>
<dbReference type="HOGENOM" id="CLU_084513_4_0_2"/>
<dbReference type="OrthoDB" id="25810at2157"/>
<dbReference type="Proteomes" id="UP000001106">
    <property type="component" value="Chromosome"/>
</dbReference>
<dbReference type="GO" id="GO:0005737">
    <property type="term" value="C:cytoplasm"/>
    <property type="evidence" value="ECO:0007669"/>
    <property type="project" value="UniProtKB-SubCell"/>
</dbReference>
<dbReference type="GO" id="GO:1990904">
    <property type="term" value="C:ribonucleoprotein complex"/>
    <property type="evidence" value="ECO:0007669"/>
    <property type="project" value="UniProtKB-KW"/>
</dbReference>
<dbReference type="GO" id="GO:0005840">
    <property type="term" value="C:ribosome"/>
    <property type="evidence" value="ECO:0007669"/>
    <property type="project" value="UniProtKB-KW"/>
</dbReference>
<dbReference type="GO" id="GO:0004526">
    <property type="term" value="F:ribonuclease P activity"/>
    <property type="evidence" value="ECO:0007669"/>
    <property type="project" value="UniProtKB-UniRule"/>
</dbReference>
<dbReference type="GO" id="GO:0019843">
    <property type="term" value="F:rRNA binding"/>
    <property type="evidence" value="ECO:0007669"/>
    <property type="project" value="UniProtKB-KW"/>
</dbReference>
<dbReference type="GO" id="GO:0003735">
    <property type="term" value="F:structural constituent of ribosome"/>
    <property type="evidence" value="ECO:0007669"/>
    <property type="project" value="InterPro"/>
</dbReference>
<dbReference type="GO" id="GO:0006412">
    <property type="term" value="P:translation"/>
    <property type="evidence" value="ECO:0007669"/>
    <property type="project" value="UniProtKB-UniRule"/>
</dbReference>
<dbReference type="GO" id="GO:0001682">
    <property type="term" value="P:tRNA 5'-leader removal"/>
    <property type="evidence" value="ECO:0007669"/>
    <property type="project" value="UniProtKB-UniRule"/>
</dbReference>
<dbReference type="FunFam" id="3.30.1330.30:FF:000020">
    <property type="entry name" value="50S ribosomal protein L7Ae"/>
    <property type="match status" value="1"/>
</dbReference>
<dbReference type="Gene3D" id="3.30.1330.30">
    <property type="match status" value="1"/>
</dbReference>
<dbReference type="HAMAP" id="MF_00326">
    <property type="entry name" value="Ribosomal_eL8"/>
    <property type="match status" value="1"/>
</dbReference>
<dbReference type="InterPro" id="IPR050257">
    <property type="entry name" value="eL8/uL1-like"/>
</dbReference>
<dbReference type="InterPro" id="IPR029064">
    <property type="entry name" value="Ribosomal_eL30-like_sf"/>
</dbReference>
<dbReference type="InterPro" id="IPR004038">
    <property type="entry name" value="Ribosomal_eL8/eL30/eS12/Gad45"/>
</dbReference>
<dbReference type="InterPro" id="IPR018492">
    <property type="entry name" value="Ribosomal_eL8/Nhp2"/>
</dbReference>
<dbReference type="InterPro" id="IPR022481">
    <property type="entry name" value="Ribosomal_eL8_arc"/>
</dbReference>
<dbReference type="NCBIfam" id="TIGR03677">
    <property type="entry name" value="eL8_ribo"/>
    <property type="match status" value="1"/>
</dbReference>
<dbReference type="PANTHER" id="PTHR23105">
    <property type="entry name" value="RIBOSOMAL PROTEIN L7AE FAMILY MEMBER"/>
    <property type="match status" value="1"/>
</dbReference>
<dbReference type="Pfam" id="PF01248">
    <property type="entry name" value="Ribosomal_L7Ae"/>
    <property type="match status" value="1"/>
</dbReference>
<dbReference type="PRINTS" id="PR00881">
    <property type="entry name" value="L7ARS6FAMILY"/>
</dbReference>
<dbReference type="PRINTS" id="PR00884">
    <property type="entry name" value="RIBOSOMALHS6"/>
</dbReference>
<dbReference type="SUPFAM" id="SSF55315">
    <property type="entry name" value="L30e-like"/>
    <property type="match status" value="1"/>
</dbReference>
<proteinExistence type="inferred from homology"/>
<feature type="chain" id="PRO_1000194098" description="Large ribosomal subunit protein eL8">
    <location>
        <begin position="1"/>
        <end position="117"/>
    </location>
</feature>
<name>RL7A_META3</name>
<organism>
    <name type="scientific">Methanococcus aeolicus (strain ATCC BAA-1280 / DSM 17508 / OCM 812 / Nankai-3)</name>
    <dbReference type="NCBI Taxonomy" id="419665"/>
    <lineage>
        <taxon>Archaea</taxon>
        <taxon>Methanobacteriati</taxon>
        <taxon>Methanobacteriota</taxon>
        <taxon>Methanomada group</taxon>
        <taxon>Methanococci</taxon>
        <taxon>Methanococcales</taxon>
        <taxon>Methanococcaceae</taxon>
        <taxon>Methanococcus</taxon>
    </lineage>
</organism>
<comment type="function">
    <text evidence="1">Multifunctional RNA-binding protein that recognizes the K-turn motif in ribosomal RNA, the RNA component of RNase P, box H/ACA, box C/D and box C'/D' sRNAs.</text>
</comment>
<comment type="subunit">
    <text evidence="1">Part of the 50S ribosomal subunit. Probably part of the RNase P complex.</text>
</comment>
<comment type="subcellular location">
    <subcellularLocation>
        <location evidence="1">Cytoplasm</location>
    </subcellularLocation>
</comment>
<comment type="similarity">
    <text evidence="1">Belongs to the eukaryotic ribosomal protein eL8 family.</text>
</comment>
<gene>
    <name evidence="1" type="primary">rpl7ae</name>
    <name type="ordered locus">Maeo_0081</name>
</gene>
<keyword id="KW-0963">Cytoplasm</keyword>
<keyword id="KW-0687">Ribonucleoprotein</keyword>
<keyword id="KW-0689">Ribosomal protein</keyword>
<keyword id="KW-0694">RNA-binding</keyword>
<keyword id="KW-0699">rRNA-binding</keyword>
<keyword id="KW-0819">tRNA processing</keyword>